<dbReference type="EMBL" id="CP001113">
    <property type="protein sequence ID" value="ACF63675.1"/>
    <property type="molecule type" value="Genomic_DNA"/>
</dbReference>
<dbReference type="RefSeq" id="WP_000192003.1">
    <property type="nucleotide sequence ID" value="NZ_CCMR01000003.1"/>
</dbReference>
<dbReference type="SMR" id="B4T4I7"/>
<dbReference type="KEGG" id="see:SNSL254_A4941"/>
<dbReference type="HOGENOM" id="CLU_147939_0_0_6"/>
<dbReference type="Proteomes" id="UP000008824">
    <property type="component" value="Chromosome"/>
</dbReference>
<dbReference type="GO" id="GO:0005737">
    <property type="term" value="C:cytoplasm"/>
    <property type="evidence" value="ECO:0007669"/>
    <property type="project" value="UniProtKB-SubCell"/>
</dbReference>
<dbReference type="GO" id="GO:0003700">
    <property type="term" value="F:DNA-binding transcription factor activity"/>
    <property type="evidence" value="ECO:0007669"/>
    <property type="project" value="InterPro"/>
</dbReference>
<dbReference type="GO" id="GO:0043565">
    <property type="term" value="F:sequence-specific DNA binding"/>
    <property type="evidence" value="ECO:0007669"/>
    <property type="project" value="InterPro"/>
</dbReference>
<dbReference type="GO" id="GO:0045892">
    <property type="term" value="P:negative regulation of DNA-templated transcription"/>
    <property type="evidence" value="ECO:0007669"/>
    <property type="project" value="UniProtKB-UniRule"/>
</dbReference>
<dbReference type="FunFam" id="1.10.1270.10:FF:000001">
    <property type="entry name" value="Trp operon repressor"/>
    <property type="match status" value="1"/>
</dbReference>
<dbReference type="Gene3D" id="1.10.1270.10">
    <property type="entry name" value="TrpR-like"/>
    <property type="match status" value="1"/>
</dbReference>
<dbReference type="HAMAP" id="MF_00475">
    <property type="entry name" value="Trp_repressor"/>
    <property type="match status" value="1"/>
</dbReference>
<dbReference type="InterPro" id="IPR000831">
    <property type="entry name" value="Trp_repress"/>
</dbReference>
<dbReference type="InterPro" id="IPR013335">
    <property type="entry name" value="Trp_repress_bac"/>
</dbReference>
<dbReference type="InterPro" id="IPR010921">
    <property type="entry name" value="Trp_repressor/repl_initiator"/>
</dbReference>
<dbReference type="InterPro" id="IPR038116">
    <property type="entry name" value="TrpR-like_sf"/>
</dbReference>
<dbReference type="NCBIfam" id="TIGR01321">
    <property type="entry name" value="TrpR"/>
    <property type="match status" value="1"/>
</dbReference>
<dbReference type="PANTHER" id="PTHR38025">
    <property type="entry name" value="TRP OPERON REPRESSOR"/>
    <property type="match status" value="1"/>
</dbReference>
<dbReference type="PANTHER" id="PTHR38025:SF1">
    <property type="entry name" value="TRP OPERON REPRESSOR"/>
    <property type="match status" value="1"/>
</dbReference>
<dbReference type="Pfam" id="PF01371">
    <property type="entry name" value="Trp_repressor"/>
    <property type="match status" value="1"/>
</dbReference>
<dbReference type="PIRSF" id="PIRSF003196">
    <property type="entry name" value="Trp_repressor"/>
    <property type="match status" value="1"/>
</dbReference>
<dbReference type="SUPFAM" id="SSF48295">
    <property type="entry name" value="TrpR-like"/>
    <property type="match status" value="1"/>
</dbReference>
<gene>
    <name evidence="1" type="primary">trpR</name>
    <name type="ordered locus">SNSL254_A4941</name>
</gene>
<evidence type="ECO:0000255" key="1">
    <source>
        <dbReference type="HAMAP-Rule" id="MF_00475"/>
    </source>
</evidence>
<protein>
    <recommendedName>
        <fullName evidence="1">Trp operon repressor</fullName>
    </recommendedName>
</protein>
<feature type="chain" id="PRO_1000197156" description="Trp operon repressor">
    <location>
        <begin position="1"/>
        <end position="108"/>
    </location>
</feature>
<feature type="DNA-binding region" evidence="1">
    <location>
        <begin position="68"/>
        <end position="91"/>
    </location>
</feature>
<comment type="function">
    <text evidence="1">This protein is an aporepressor. When complexed with L-tryptophan it binds the operator region of the trp operon (5'-ACTAGT-'3') and prevents the initiation of transcription. The complex also regulates trp repressor biosynthesis by binding to its regulatory region.</text>
</comment>
<comment type="subunit">
    <text evidence="1">Homodimer.</text>
</comment>
<comment type="subcellular location">
    <subcellularLocation>
        <location evidence="1">Cytoplasm</location>
    </subcellularLocation>
</comment>
<comment type="similarity">
    <text evidence="1">Belongs to the TrpR family.</text>
</comment>
<name>TRPR_SALNS</name>
<organism>
    <name type="scientific">Salmonella newport (strain SL254)</name>
    <dbReference type="NCBI Taxonomy" id="423368"/>
    <lineage>
        <taxon>Bacteria</taxon>
        <taxon>Pseudomonadati</taxon>
        <taxon>Pseudomonadota</taxon>
        <taxon>Gammaproteobacteria</taxon>
        <taxon>Enterobacterales</taxon>
        <taxon>Enterobacteriaceae</taxon>
        <taxon>Salmonella</taxon>
    </lineage>
</organism>
<reference key="1">
    <citation type="journal article" date="2011" name="J. Bacteriol.">
        <title>Comparative genomics of 28 Salmonella enterica isolates: evidence for CRISPR-mediated adaptive sublineage evolution.</title>
        <authorList>
            <person name="Fricke W.F."/>
            <person name="Mammel M.K."/>
            <person name="McDermott P.F."/>
            <person name="Tartera C."/>
            <person name="White D.G."/>
            <person name="Leclerc J.E."/>
            <person name="Ravel J."/>
            <person name="Cebula T.A."/>
        </authorList>
    </citation>
    <scope>NUCLEOTIDE SEQUENCE [LARGE SCALE GENOMIC DNA]</scope>
    <source>
        <strain>SL254</strain>
    </source>
</reference>
<proteinExistence type="inferred from homology"/>
<sequence length="108" mass="12391">MTQHSPYSSAIAEQRNQEWLRFVELLRQAYAEDLHLPLLQLMLTPDEREALGTRVRIIEELLRGEMSQRELKTELGAGIATITRGSNSLKSAPVELRHWLENVLLKNA</sequence>
<accession>B4T4I7</accession>
<keyword id="KW-0963">Cytoplasm</keyword>
<keyword id="KW-0238">DNA-binding</keyword>
<keyword id="KW-0678">Repressor</keyword>
<keyword id="KW-0804">Transcription</keyword>
<keyword id="KW-0805">Transcription regulation</keyword>